<sequence>MNDSNDTSVAGGAAGADSRVLSADSALTERQRTILDVIRASVTSRGYPPSIREIGDAVGLTSTSSVAHQLRTLERKGYLRRDPNRPRAVNVRGADDAALPPVTEVAGSDALPEPTFAPVLGRIAAGGPILAEEAVEDVFPLPRELVGEGTLFLLKVIGDSMVEAAICDGDWVVVRQQNVADNGDIVAAMIDGEATVKTFKRAGGQVWLMPHNPAFDPIPGNDATVLGKVVTVIRKV</sequence>
<gene>
    <name evidence="1" type="primary">lexA</name>
    <name type="ordered locus">JTY_2727</name>
</gene>
<reference key="1">
    <citation type="journal article" date="2009" name="Vaccine">
        <title>Whole genome sequence analysis of Mycobacterium bovis bacillus Calmette-Guerin (BCG) Tokyo 172: a comparative study of BCG vaccine substrains.</title>
        <authorList>
            <person name="Seki M."/>
            <person name="Honda I."/>
            <person name="Fujita I."/>
            <person name="Yano I."/>
            <person name="Yamamoto S."/>
            <person name="Koyama A."/>
        </authorList>
    </citation>
    <scope>NUCLEOTIDE SEQUENCE [LARGE SCALE GENOMIC DNA]</scope>
    <source>
        <strain>BCG / Tokyo 172 / ATCC 35737 / TMC 1019</strain>
    </source>
</reference>
<organism>
    <name type="scientific">Mycobacterium bovis (strain BCG / Tokyo 172 / ATCC 35737 / TMC 1019)</name>
    <dbReference type="NCBI Taxonomy" id="561275"/>
    <lineage>
        <taxon>Bacteria</taxon>
        <taxon>Bacillati</taxon>
        <taxon>Actinomycetota</taxon>
        <taxon>Actinomycetes</taxon>
        <taxon>Mycobacteriales</taxon>
        <taxon>Mycobacteriaceae</taxon>
        <taxon>Mycobacterium</taxon>
        <taxon>Mycobacterium tuberculosis complex</taxon>
    </lineage>
</organism>
<keyword id="KW-0068">Autocatalytic cleavage</keyword>
<keyword id="KW-0227">DNA damage</keyword>
<keyword id="KW-0234">DNA repair</keyword>
<keyword id="KW-0235">DNA replication</keyword>
<keyword id="KW-0238">DNA-binding</keyword>
<keyword id="KW-0378">Hydrolase</keyword>
<keyword id="KW-0678">Repressor</keyword>
<keyword id="KW-0742">SOS response</keyword>
<keyword id="KW-0804">Transcription</keyword>
<keyword id="KW-0805">Transcription regulation</keyword>
<name>LEXA_MYCBT</name>
<evidence type="ECO:0000255" key="1">
    <source>
        <dbReference type="HAMAP-Rule" id="MF_00015"/>
    </source>
</evidence>
<evidence type="ECO:0000256" key="2">
    <source>
        <dbReference type="SAM" id="MobiDB-lite"/>
    </source>
</evidence>
<evidence type="ECO:0000305" key="3"/>
<feature type="chain" id="PRO_1000192772" description="LexA repressor">
    <location>
        <begin position="1"/>
        <end position="236"/>
    </location>
</feature>
<feature type="DNA-binding region" description="H-T-H motif" evidence="1">
    <location>
        <begin position="51"/>
        <end position="71"/>
    </location>
</feature>
<feature type="region of interest" description="Disordered" evidence="2">
    <location>
        <begin position="1"/>
        <end position="25"/>
    </location>
</feature>
<feature type="active site" description="For autocatalytic cleavage activity" evidence="1">
    <location>
        <position position="160"/>
    </location>
</feature>
<feature type="active site" description="For autocatalytic cleavage activity" evidence="1">
    <location>
        <position position="197"/>
    </location>
</feature>
<feature type="site" description="Cleavage; by autolysis" evidence="1">
    <location>
        <begin position="125"/>
        <end position="126"/>
    </location>
</feature>
<accession>C1AFH9</accession>
<dbReference type="EC" id="3.4.21.88" evidence="1"/>
<dbReference type="EMBL" id="AP010918">
    <property type="protein sequence ID" value="BAH27008.1"/>
    <property type="status" value="ALT_INIT"/>
    <property type="molecule type" value="Genomic_DNA"/>
</dbReference>
<dbReference type="RefSeq" id="WP_019283510.1">
    <property type="nucleotide sequence ID" value="NZ_CP014566.1"/>
</dbReference>
<dbReference type="SMR" id="C1AFH9"/>
<dbReference type="MEROPS" id="S24.001"/>
<dbReference type="KEGG" id="mbt:JTY_2727"/>
<dbReference type="HOGENOM" id="CLU_066192_45_0_11"/>
<dbReference type="GO" id="GO:0003677">
    <property type="term" value="F:DNA binding"/>
    <property type="evidence" value="ECO:0007669"/>
    <property type="project" value="UniProtKB-UniRule"/>
</dbReference>
<dbReference type="GO" id="GO:0004252">
    <property type="term" value="F:serine-type endopeptidase activity"/>
    <property type="evidence" value="ECO:0007669"/>
    <property type="project" value="UniProtKB-UniRule"/>
</dbReference>
<dbReference type="GO" id="GO:0006281">
    <property type="term" value="P:DNA repair"/>
    <property type="evidence" value="ECO:0007669"/>
    <property type="project" value="UniProtKB-UniRule"/>
</dbReference>
<dbReference type="GO" id="GO:0006260">
    <property type="term" value="P:DNA replication"/>
    <property type="evidence" value="ECO:0007669"/>
    <property type="project" value="UniProtKB-UniRule"/>
</dbReference>
<dbReference type="GO" id="GO:0045892">
    <property type="term" value="P:negative regulation of DNA-templated transcription"/>
    <property type="evidence" value="ECO:0007669"/>
    <property type="project" value="UniProtKB-UniRule"/>
</dbReference>
<dbReference type="GO" id="GO:0006508">
    <property type="term" value="P:proteolysis"/>
    <property type="evidence" value="ECO:0007669"/>
    <property type="project" value="InterPro"/>
</dbReference>
<dbReference type="GO" id="GO:0009432">
    <property type="term" value="P:SOS response"/>
    <property type="evidence" value="ECO:0007669"/>
    <property type="project" value="UniProtKB-UniRule"/>
</dbReference>
<dbReference type="CDD" id="cd06529">
    <property type="entry name" value="S24_LexA-like"/>
    <property type="match status" value="1"/>
</dbReference>
<dbReference type="FunFam" id="1.10.10.10:FF:000009">
    <property type="entry name" value="LexA repressor"/>
    <property type="match status" value="1"/>
</dbReference>
<dbReference type="FunFam" id="2.10.109.10:FF:000001">
    <property type="entry name" value="LexA repressor"/>
    <property type="match status" value="1"/>
</dbReference>
<dbReference type="Gene3D" id="2.10.109.10">
    <property type="entry name" value="Umud Fragment, subunit A"/>
    <property type="match status" value="1"/>
</dbReference>
<dbReference type="Gene3D" id="1.10.10.10">
    <property type="entry name" value="Winged helix-like DNA-binding domain superfamily/Winged helix DNA-binding domain"/>
    <property type="match status" value="1"/>
</dbReference>
<dbReference type="HAMAP" id="MF_00015">
    <property type="entry name" value="LexA"/>
    <property type="match status" value="1"/>
</dbReference>
<dbReference type="InterPro" id="IPR006200">
    <property type="entry name" value="LexA"/>
</dbReference>
<dbReference type="InterPro" id="IPR039418">
    <property type="entry name" value="LexA-like"/>
</dbReference>
<dbReference type="InterPro" id="IPR036286">
    <property type="entry name" value="LexA/Signal_pep-like_sf"/>
</dbReference>
<dbReference type="InterPro" id="IPR006199">
    <property type="entry name" value="LexA_DNA-bd_dom"/>
</dbReference>
<dbReference type="InterPro" id="IPR050077">
    <property type="entry name" value="LexA_repressor"/>
</dbReference>
<dbReference type="InterPro" id="IPR006197">
    <property type="entry name" value="Peptidase_S24_LexA"/>
</dbReference>
<dbReference type="InterPro" id="IPR015927">
    <property type="entry name" value="Peptidase_S24_S26A/B/C"/>
</dbReference>
<dbReference type="InterPro" id="IPR036388">
    <property type="entry name" value="WH-like_DNA-bd_sf"/>
</dbReference>
<dbReference type="InterPro" id="IPR036390">
    <property type="entry name" value="WH_DNA-bd_sf"/>
</dbReference>
<dbReference type="NCBIfam" id="TIGR00498">
    <property type="entry name" value="lexA"/>
    <property type="match status" value="1"/>
</dbReference>
<dbReference type="PANTHER" id="PTHR33516">
    <property type="entry name" value="LEXA REPRESSOR"/>
    <property type="match status" value="1"/>
</dbReference>
<dbReference type="PANTHER" id="PTHR33516:SF2">
    <property type="entry name" value="LEXA REPRESSOR-RELATED"/>
    <property type="match status" value="1"/>
</dbReference>
<dbReference type="Pfam" id="PF01726">
    <property type="entry name" value="LexA_DNA_bind"/>
    <property type="match status" value="1"/>
</dbReference>
<dbReference type="Pfam" id="PF00717">
    <property type="entry name" value="Peptidase_S24"/>
    <property type="match status" value="1"/>
</dbReference>
<dbReference type="PRINTS" id="PR00726">
    <property type="entry name" value="LEXASERPTASE"/>
</dbReference>
<dbReference type="SUPFAM" id="SSF51306">
    <property type="entry name" value="LexA/Signal peptidase"/>
    <property type="match status" value="1"/>
</dbReference>
<dbReference type="SUPFAM" id="SSF46785">
    <property type="entry name" value="Winged helix' DNA-binding domain"/>
    <property type="match status" value="1"/>
</dbReference>
<comment type="function">
    <text evidence="1">Represses a number of genes involved in the response to DNA damage (SOS response), including recA and lexA. In the presence of single-stranded DNA, RecA interacts with LexA causing an autocatalytic cleavage which disrupts the DNA-binding part of LexA, leading to derepression of the SOS regulon and eventually DNA repair.</text>
</comment>
<comment type="catalytic activity">
    <reaction evidence="1">
        <text>Hydrolysis of Ala-|-Gly bond in repressor LexA.</text>
        <dbReference type="EC" id="3.4.21.88"/>
    </reaction>
</comment>
<comment type="subunit">
    <text evidence="1">Homodimer.</text>
</comment>
<comment type="similarity">
    <text evidence="1">Belongs to the peptidase S24 family.</text>
</comment>
<comment type="sequence caution" evidence="3">
    <conflict type="erroneous initiation">
        <sequence resource="EMBL-CDS" id="BAH27008"/>
    </conflict>
    <text>Truncated N-terminus.</text>
</comment>
<proteinExistence type="inferred from homology"/>
<protein>
    <recommendedName>
        <fullName evidence="1">LexA repressor</fullName>
        <ecNumber evidence="1">3.4.21.88</ecNumber>
    </recommendedName>
</protein>